<name>ACCD_STRDG</name>
<feature type="chain" id="PRO_0000389866" description="Acetyl-coenzyme A carboxylase carboxyl transferase subunit beta">
    <location>
        <begin position="1"/>
        <end position="288"/>
    </location>
</feature>
<feature type="domain" description="CoA carboxyltransferase N-terminal" evidence="2">
    <location>
        <begin position="34"/>
        <end position="288"/>
    </location>
</feature>
<feature type="zinc finger region" description="C4-type" evidence="1">
    <location>
        <begin position="38"/>
        <end position="59"/>
    </location>
</feature>
<feature type="binding site" evidence="1">
    <location>
        <position position="38"/>
    </location>
    <ligand>
        <name>Zn(2+)</name>
        <dbReference type="ChEBI" id="CHEBI:29105"/>
    </ligand>
</feature>
<feature type="binding site" evidence="1">
    <location>
        <position position="41"/>
    </location>
    <ligand>
        <name>Zn(2+)</name>
        <dbReference type="ChEBI" id="CHEBI:29105"/>
    </ligand>
</feature>
<feature type="binding site" evidence="1">
    <location>
        <position position="56"/>
    </location>
    <ligand>
        <name>Zn(2+)</name>
        <dbReference type="ChEBI" id="CHEBI:29105"/>
    </ligand>
</feature>
<feature type="binding site" evidence="1">
    <location>
        <position position="59"/>
    </location>
    <ligand>
        <name>Zn(2+)</name>
        <dbReference type="ChEBI" id="CHEBI:29105"/>
    </ligand>
</feature>
<reference key="1">
    <citation type="journal article" date="2011" name="BMC Genomics">
        <title>Complete genome sequencing and analysis of a Lancefield group G Streptococcus dysgalactiae subsp. equisimilis strain causing streptococcal toxic shock syndrome (STSS).</title>
        <authorList>
            <person name="Shimomura Y."/>
            <person name="Okumura K."/>
            <person name="Murayama S.Y."/>
            <person name="Yagi J."/>
            <person name="Ubukata K."/>
            <person name="Kirikae T."/>
            <person name="Miyoshi-Akiyama T."/>
        </authorList>
    </citation>
    <scope>NUCLEOTIDE SEQUENCE [LARGE SCALE GENOMIC DNA]</scope>
    <source>
        <strain>GGS_124</strain>
    </source>
</reference>
<accession>C5WIT0</accession>
<protein>
    <recommendedName>
        <fullName evidence="1">Acetyl-coenzyme A carboxylase carboxyl transferase subunit beta</fullName>
        <shortName evidence="1">ACCase subunit beta</shortName>
        <shortName evidence="1">Acetyl-CoA carboxylase carboxyltransferase subunit beta</shortName>
        <ecNumber evidence="1">2.1.3.15</ecNumber>
    </recommendedName>
</protein>
<comment type="function">
    <text evidence="1">Component of the acetyl coenzyme A carboxylase (ACC) complex. Biotin carboxylase (BC) catalyzes the carboxylation of biotin on its carrier protein (BCCP) and then the CO(2) group is transferred by the transcarboxylase to acetyl-CoA to form malonyl-CoA.</text>
</comment>
<comment type="catalytic activity">
    <reaction evidence="1">
        <text>N(6)-carboxybiotinyl-L-lysyl-[protein] + acetyl-CoA = N(6)-biotinyl-L-lysyl-[protein] + malonyl-CoA</text>
        <dbReference type="Rhea" id="RHEA:54728"/>
        <dbReference type="Rhea" id="RHEA-COMP:10505"/>
        <dbReference type="Rhea" id="RHEA-COMP:10506"/>
        <dbReference type="ChEBI" id="CHEBI:57288"/>
        <dbReference type="ChEBI" id="CHEBI:57384"/>
        <dbReference type="ChEBI" id="CHEBI:83144"/>
        <dbReference type="ChEBI" id="CHEBI:83145"/>
        <dbReference type="EC" id="2.1.3.15"/>
    </reaction>
</comment>
<comment type="cofactor">
    <cofactor evidence="1">
        <name>Zn(2+)</name>
        <dbReference type="ChEBI" id="CHEBI:29105"/>
    </cofactor>
    <text evidence="1">Binds 1 zinc ion per subunit.</text>
</comment>
<comment type="pathway">
    <text evidence="1">Lipid metabolism; malonyl-CoA biosynthesis; malonyl-CoA from acetyl-CoA: step 1/1.</text>
</comment>
<comment type="subunit">
    <text evidence="1">Acetyl-CoA carboxylase is a heterohexamer composed of biotin carboxyl carrier protein (AccB), biotin carboxylase (AccC) and two subunits each of ACCase subunit alpha (AccA) and ACCase subunit beta (AccD).</text>
</comment>
<comment type="subcellular location">
    <subcellularLocation>
        <location evidence="1">Cytoplasm</location>
    </subcellularLocation>
</comment>
<comment type="similarity">
    <text evidence="1">Belongs to the AccD/PCCB family.</text>
</comment>
<sequence length="288" mass="31802">MALFRKKDKYIRITPNNSLKGSVSQVIPEVPDELFAKCPACKHMIYKKDLGLAKICPTCSYNFRISAQERLTLTVDEGSFQELFTSIETKDPLRFPGYQEKLQKAKETTGLHEAVLTGKAMVKEQKIALAIMDSHFIMASMGTVVGEKITRLFELAIEENLPVVIFTASGGARMQEGIMSLMQMAKVSAAVKRHSNAGLFYLTILTDPTTGGVTASFAMEGDIILAEPQSLVGFAGRRVIETTVRENLPDDFQKAEFLQDHGFVDAIVKRTELRDKVAHLVAFHGGGQ</sequence>
<keyword id="KW-0067">ATP-binding</keyword>
<keyword id="KW-0963">Cytoplasm</keyword>
<keyword id="KW-0275">Fatty acid biosynthesis</keyword>
<keyword id="KW-0276">Fatty acid metabolism</keyword>
<keyword id="KW-0444">Lipid biosynthesis</keyword>
<keyword id="KW-0443">Lipid metabolism</keyword>
<keyword id="KW-0479">Metal-binding</keyword>
<keyword id="KW-0547">Nucleotide-binding</keyword>
<keyword id="KW-0808">Transferase</keyword>
<keyword id="KW-0862">Zinc</keyword>
<keyword id="KW-0863">Zinc-finger</keyword>
<organism>
    <name type="scientific">Streptococcus dysgalactiae subsp. equisimilis (strain GGS_124)</name>
    <dbReference type="NCBI Taxonomy" id="486410"/>
    <lineage>
        <taxon>Bacteria</taxon>
        <taxon>Bacillati</taxon>
        <taxon>Bacillota</taxon>
        <taxon>Bacilli</taxon>
        <taxon>Lactobacillales</taxon>
        <taxon>Streptococcaceae</taxon>
        <taxon>Streptococcus</taxon>
    </lineage>
</organism>
<dbReference type="EC" id="2.1.3.15" evidence="1"/>
<dbReference type="EMBL" id="AP010935">
    <property type="protein sequence ID" value="BAH82295.1"/>
    <property type="molecule type" value="Genomic_DNA"/>
</dbReference>
<dbReference type="RefSeq" id="WP_003056659.1">
    <property type="nucleotide sequence ID" value="NC_012891.1"/>
</dbReference>
<dbReference type="SMR" id="C5WIT0"/>
<dbReference type="KEGG" id="sds:SDEG_1813"/>
<dbReference type="HOGENOM" id="CLU_015486_1_1_9"/>
<dbReference type="UniPathway" id="UPA00655">
    <property type="reaction ID" value="UER00711"/>
</dbReference>
<dbReference type="GO" id="GO:0009317">
    <property type="term" value="C:acetyl-CoA carboxylase complex"/>
    <property type="evidence" value="ECO:0007669"/>
    <property type="project" value="InterPro"/>
</dbReference>
<dbReference type="GO" id="GO:0003989">
    <property type="term" value="F:acetyl-CoA carboxylase activity"/>
    <property type="evidence" value="ECO:0007669"/>
    <property type="project" value="InterPro"/>
</dbReference>
<dbReference type="GO" id="GO:0005524">
    <property type="term" value="F:ATP binding"/>
    <property type="evidence" value="ECO:0007669"/>
    <property type="project" value="UniProtKB-KW"/>
</dbReference>
<dbReference type="GO" id="GO:0016743">
    <property type="term" value="F:carboxyl- or carbamoyltransferase activity"/>
    <property type="evidence" value="ECO:0007669"/>
    <property type="project" value="UniProtKB-UniRule"/>
</dbReference>
<dbReference type="GO" id="GO:0008270">
    <property type="term" value="F:zinc ion binding"/>
    <property type="evidence" value="ECO:0007669"/>
    <property type="project" value="UniProtKB-UniRule"/>
</dbReference>
<dbReference type="GO" id="GO:0006633">
    <property type="term" value="P:fatty acid biosynthetic process"/>
    <property type="evidence" value="ECO:0007669"/>
    <property type="project" value="UniProtKB-KW"/>
</dbReference>
<dbReference type="GO" id="GO:2001295">
    <property type="term" value="P:malonyl-CoA biosynthetic process"/>
    <property type="evidence" value="ECO:0007669"/>
    <property type="project" value="UniProtKB-UniRule"/>
</dbReference>
<dbReference type="Gene3D" id="3.90.226.10">
    <property type="entry name" value="2-enoyl-CoA Hydratase, Chain A, domain 1"/>
    <property type="match status" value="1"/>
</dbReference>
<dbReference type="HAMAP" id="MF_01395">
    <property type="entry name" value="AcetylCoA_CT_beta"/>
    <property type="match status" value="1"/>
</dbReference>
<dbReference type="InterPro" id="IPR034733">
    <property type="entry name" value="AcCoA_carboxyl_beta"/>
</dbReference>
<dbReference type="InterPro" id="IPR000438">
    <property type="entry name" value="Acetyl_CoA_COase_Trfase_b_su"/>
</dbReference>
<dbReference type="InterPro" id="IPR029045">
    <property type="entry name" value="ClpP/crotonase-like_dom_sf"/>
</dbReference>
<dbReference type="InterPro" id="IPR011762">
    <property type="entry name" value="COA_CT_N"/>
</dbReference>
<dbReference type="NCBIfam" id="TIGR00515">
    <property type="entry name" value="accD"/>
    <property type="match status" value="1"/>
</dbReference>
<dbReference type="PANTHER" id="PTHR42995">
    <property type="entry name" value="ACETYL-COENZYME A CARBOXYLASE CARBOXYL TRANSFERASE SUBUNIT BETA, CHLOROPLASTIC"/>
    <property type="match status" value="1"/>
</dbReference>
<dbReference type="PANTHER" id="PTHR42995:SF5">
    <property type="entry name" value="ACETYL-COENZYME A CARBOXYLASE CARBOXYL TRANSFERASE SUBUNIT BETA, CHLOROPLASTIC"/>
    <property type="match status" value="1"/>
</dbReference>
<dbReference type="Pfam" id="PF01039">
    <property type="entry name" value="Carboxyl_trans"/>
    <property type="match status" value="1"/>
</dbReference>
<dbReference type="PRINTS" id="PR01070">
    <property type="entry name" value="ACCCTRFRASEB"/>
</dbReference>
<dbReference type="SUPFAM" id="SSF52096">
    <property type="entry name" value="ClpP/crotonase"/>
    <property type="match status" value="1"/>
</dbReference>
<dbReference type="PROSITE" id="PS50980">
    <property type="entry name" value="COA_CT_NTER"/>
    <property type="match status" value="1"/>
</dbReference>
<gene>
    <name evidence="1" type="primary">accD</name>
    <name type="ordered locus">SDEG_1813</name>
</gene>
<evidence type="ECO:0000255" key="1">
    <source>
        <dbReference type="HAMAP-Rule" id="MF_01395"/>
    </source>
</evidence>
<evidence type="ECO:0000255" key="2">
    <source>
        <dbReference type="PROSITE-ProRule" id="PRU01136"/>
    </source>
</evidence>
<proteinExistence type="inferred from homology"/>